<comment type="function">
    <text evidence="1">Sodium-dependent and purine-selective transporter. Exhibits the transport characteristics of the nucleoside transport system cif or N1 subtype (N1/cif) (selective for purine nucleosides and uridine). Plays a critical role in specific uptake and salvage of purine nucleosides in kidney and other tissues. May contribute to regulate the transport of organic compounds in testes across the blood-testis-barrier (By similarity).</text>
</comment>
<comment type="catalytic activity">
    <reaction evidence="1">
        <text>adenosine(out) + Na(+)(out) = adenosine(in) + Na(+)(in)</text>
        <dbReference type="Rhea" id="RHEA:69927"/>
        <dbReference type="ChEBI" id="CHEBI:16335"/>
        <dbReference type="ChEBI" id="CHEBI:29101"/>
    </reaction>
</comment>
<comment type="catalytic activity">
    <reaction evidence="1">
        <text>inosine(out) + Na(+)(out) = inosine(in) + Na(+)(in)</text>
        <dbReference type="Rhea" id="RHEA:69931"/>
        <dbReference type="ChEBI" id="CHEBI:17596"/>
        <dbReference type="ChEBI" id="CHEBI:29101"/>
    </reaction>
</comment>
<comment type="catalytic activity">
    <reaction evidence="1">
        <text>guanosine(out) + Na(+)(out) = guanosine(in) + Na(+)(in)</text>
        <dbReference type="Rhea" id="RHEA:69935"/>
        <dbReference type="ChEBI" id="CHEBI:16750"/>
        <dbReference type="ChEBI" id="CHEBI:29101"/>
    </reaction>
</comment>
<comment type="catalytic activity">
    <reaction evidence="1">
        <text>uridine(out) + Na(+)(out) = uridine(in) + Na(+)(in)</text>
        <dbReference type="Rhea" id="RHEA:69887"/>
        <dbReference type="ChEBI" id="CHEBI:16704"/>
        <dbReference type="ChEBI" id="CHEBI:29101"/>
    </reaction>
</comment>
<comment type="subcellular location">
    <subcellularLocation>
        <location evidence="1">Membrane</location>
        <topology evidence="3">Multi-pass membrane protein</topology>
    </subcellularLocation>
    <subcellularLocation>
        <location evidence="1">Apicolateral cell membrane</location>
        <topology evidence="3">Multi-pass membrane protein</topology>
    </subcellularLocation>
</comment>
<comment type="similarity">
    <text evidence="5">Belongs to the concentrative nucleoside transporter (CNT) (TC 2.A.41) family.</text>
</comment>
<keyword id="KW-1003">Cell membrane</keyword>
<keyword id="KW-0472">Membrane</keyword>
<keyword id="KW-0597">Phosphoprotein</keyword>
<keyword id="KW-1185">Reference proteome</keyword>
<keyword id="KW-0812">Transmembrane</keyword>
<keyword id="KW-1133">Transmembrane helix</keyword>
<keyword id="KW-0813">Transport</keyword>
<sequence length="660" mass="72916">MEKSKGRKSVSQATVENCMENPGLELMEGGNLEQRYTQEEVTQGHSLEDGLGHSSLWSRRIFQPFTKARSFFERHAGLFRKILLGLLCLAYAAYFLAACILNFQRALALFVITCLVIFILACHFLKKFFPKEQLRCLKPLENTHLNLWAKRVFVGLSVVGLILWLALDTAQRPEQLISFAGICMFILILFACSKHHSAVCWRTVFWGLGLQFIFGILVIRTEPGFNAFQWLGDQIQIFLAYTVEGSSFVFGDTLVQNVFAFQSLPIIIFFGCVMSILYYLGLVQWVIQKVAWFLQITMGTTAAETLAVAGNIFVGMTEAPLLIRPYLADMTISEIHAVMTGGFATIAGTVLGAFISFGIDASSLISASVMAAPCALALSKLVYPEVEESKFKSKEGLKLPRGEERNILEAASNGATDAISLVANVAANLIAFLAVLAFINATLSWLGEMVDIHGLSFQVICSYVLRPMVFMMGVQWADCPLVAEIVGVKFFINEFVAYQQLSQYKNKRLSGVEEWINGEKQWISVKAEIITTFSLCGFANLSSIGITLGGLTSMIPQRKSDLCKIVVRALFTGACVSFISACMAGILYVPRGAETDCVSFLNTNFTNRTYETYVCCRELFQSTSLNGTNMPSFSGPWQDNVSSLRNLASCCDLYTSTVCA</sequence>
<proteinExistence type="evidence at protein level"/>
<protein>
    <recommendedName>
        <fullName>Sodium/nucleoside cotransporter 2</fullName>
    </recommendedName>
    <alternativeName>
        <fullName evidence="4">Concentrative nucleoside transporter 2</fullName>
        <shortName evidence="4">CNT 2</shortName>
    </alternativeName>
    <alternativeName>
        <fullName>Na(+)/nucleoside cotransporter 2</fullName>
    </alternativeName>
    <alternativeName>
        <fullName>Sodium-coupled nucleoside transporter 2</fullName>
    </alternativeName>
    <alternativeName>
        <fullName>Sodium/purine nucleoside cotransporter</fullName>
        <shortName>SPNT</shortName>
    </alternativeName>
    <alternativeName>
        <fullName>Solute carrier family 28 member 2</fullName>
    </alternativeName>
</protein>
<name>S28A2_MOUSE</name>
<dbReference type="EMBL" id="AF079853">
    <property type="protein sequence ID" value="AAC28858.1"/>
    <property type="molecule type" value="mRNA"/>
</dbReference>
<dbReference type="EMBL" id="AK080957">
    <property type="protein sequence ID" value="BAC38094.1"/>
    <property type="molecule type" value="mRNA"/>
</dbReference>
<dbReference type="EMBL" id="AK152776">
    <property type="protein sequence ID" value="BAE31488.1"/>
    <property type="molecule type" value="mRNA"/>
</dbReference>
<dbReference type="EMBL" id="AL844566">
    <property type="status" value="NOT_ANNOTATED_CDS"/>
    <property type="molecule type" value="Genomic_DNA"/>
</dbReference>
<dbReference type="CCDS" id="CCDS16663.1"/>
<dbReference type="RefSeq" id="NP_001343461.1">
    <property type="nucleotide sequence ID" value="NM_001356532.3"/>
</dbReference>
<dbReference type="RefSeq" id="NP_001366388.1">
    <property type="nucleotide sequence ID" value="NM_001379459.1"/>
</dbReference>
<dbReference type="RefSeq" id="NP_001366389.1">
    <property type="nucleotide sequence ID" value="NM_001379460.1"/>
</dbReference>
<dbReference type="RefSeq" id="NP_766568.1">
    <property type="nucleotide sequence ID" value="NM_172980.4"/>
</dbReference>
<dbReference type="RefSeq" id="XP_006499664.1">
    <property type="nucleotide sequence ID" value="XM_006499601.3"/>
</dbReference>
<dbReference type="RefSeq" id="XP_011237878.1">
    <property type="nucleotide sequence ID" value="XM_011239576.2"/>
</dbReference>
<dbReference type="RefSeq" id="XP_036018135.1">
    <property type="nucleotide sequence ID" value="XM_036162242.1"/>
</dbReference>
<dbReference type="RefSeq" id="XP_036018136.1">
    <property type="nucleotide sequence ID" value="XM_036162243.1"/>
</dbReference>
<dbReference type="SMR" id="O88627"/>
<dbReference type="FunCoup" id="O88627">
    <property type="interactions" value="12"/>
</dbReference>
<dbReference type="STRING" id="10090.ENSMUSP00000106154"/>
<dbReference type="ChEMBL" id="CHEMBL1287613"/>
<dbReference type="GlyGen" id="O88627">
    <property type="glycosylation" value="1 site, 1 O-linked glycan (1 site)"/>
</dbReference>
<dbReference type="iPTMnet" id="O88627"/>
<dbReference type="PhosphoSitePlus" id="O88627"/>
<dbReference type="PaxDb" id="10090-ENSMUSP00000106154"/>
<dbReference type="ProteomicsDB" id="260901"/>
<dbReference type="DNASU" id="269346"/>
<dbReference type="Ensembl" id="ENSMUST00000028652.12">
    <property type="protein sequence ID" value="ENSMUSP00000028652.6"/>
    <property type="gene ID" value="ENSMUSG00000027219.14"/>
</dbReference>
<dbReference type="Ensembl" id="ENSMUST00000110524.2">
    <property type="protein sequence ID" value="ENSMUSP00000106153.2"/>
    <property type="gene ID" value="ENSMUSG00000027219.14"/>
</dbReference>
<dbReference type="Ensembl" id="ENSMUST00000110525.8">
    <property type="protein sequence ID" value="ENSMUSP00000106154.2"/>
    <property type="gene ID" value="ENSMUSG00000027219.14"/>
</dbReference>
<dbReference type="GeneID" id="269346"/>
<dbReference type="KEGG" id="mmu:269346"/>
<dbReference type="UCSC" id="uc008mas.1">
    <property type="organism name" value="mouse"/>
</dbReference>
<dbReference type="AGR" id="MGI:1913105"/>
<dbReference type="CTD" id="9153"/>
<dbReference type="MGI" id="MGI:1913105">
    <property type="gene designation" value="Slc28a2"/>
</dbReference>
<dbReference type="VEuPathDB" id="HostDB:ENSMUSG00000027219"/>
<dbReference type="eggNOG" id="KOG3747">
    <property type="taxonomic scope" value="Eukaryota"/>
</dbReference>
<dbReference type="GeneTree" id="ENSGT00390000016025"/>
<dbReference type="HOGENOM" id="CLU_016813_3_2_1"/>
<dbReference type="InParanoid" id="O88627"/>
<dbReference type="OMA" id="IMLYAMC"/>
<dbReference type="OrthoDB" id="6075923at2759"/>
<dbReference type="PhylomeDB" id="O88627"/>
<dbReference type="TreeFam" id="TF314131"/>
<dbReference type="Reactome" id="R-MMU-83936">
    <property type="pathway name" value="Transport of nucleosides and free purine and pyrimidine bases across the plasma membrane"/>
</dbReference>
<dbReference type="Reactome" id="R-MMU-9748787">
    <property type="pathway name" value="Azathioprine ADME"/>
</dbReference>
<dbReference type="Reactome" id="R-MMU-9755088">
    <property type="pathway name" value="Ribavirin ADME"/>
</dbReference>
<dbReference type="BioGRID-ORCS" id="269346">
    <property type="hits" value="0 hits in 76 CRISPR screens"/>
</dbReference>
<dbReference type="PRO" id="PR:O88627"/>
<dbReference type="Proteomes" id="UP000000589">
    <property type="component" value="Chromosome 2"/>
</dbReference>
<dbReference type="RNAct" id="O88627">
    <property type="molecule type" value="protein"/>
</dbReference>
<dbReference type="Bgee" id="ENSMUSG00000027219">
    <property type="expression patterns" value="Expressed in jejunum and 40 other cell types or tissues"/>
</dbReference>
<dbReference type="GO" id="GO:0016327">
    <property type="term" value="C:apicolateral plasma membrane"/>
    <property type="evidence" value="ECO:0000250"/>
    <property type="project" value="UniProtKB"/>
</dbReference>
<dbReference type="GO" id="GO:0031526">
    <property type="term" value="C:brush border membrane"/>
    <property type="evidence" value="ECO:0000314"/>
    <property type="project" value="ARUK-UCL"/>
</dbReference>
<dbReference type="GO" id="GO:0005886">
    <property type="term" value="C:plasma membrane"/>
    <property type="evidence" value="ECO:0000250"/>
    <property type="project" value="MGI"/>
</dbReference>
<dbReference type="GO" id="GO:0015211">
    <property type="term" value="F:purine nucleoside transmembrane transporter activity"/>
    <property type="evidence" value="ECO:0000314"/>
    <property type="project" value="MGI"/>
</dbReference>
<dbReference type="GO" id="GO:0015860">
    <property type="term" value="P:purine nucleoside transmembrane transport"/>
    <property type="evidence" value="ECO:0000304"/>
    <property type="project" value="MGI"/>
</dbReference>
<dbReference type="InterPro" id="IPR008276">
    <property type="entry name" value="C_nuclsd_transpt"/>
</dbReference>
<dbReference type="InterPro" id="IPR018270">
    <property type="entry name" value="C_nuclsd_transpt_met_bac"/>
</dbReference>
<dbReference type="InterPro" id="IPR011657">
    <property type="entry name" value="CNT_C_dom"/>
</dbReference>
<dbReference type="InterPro" id="IPR002668">
    <property type="entry name" value="CNT_N_dom"/>
</dbReference>
<dbReference type="InterPro" id="IPR011642">
    <property type="entry name" value="Gate_dom"/>
</dbReference>
<dbReference type="NCBIfam" id="TIGR00804">
    <property type="entry name" value="nupC"/>
    <property type="match status" value="1"/>
</dbReference>
<dbReference type="PANTHER" id="PTHR10590">
    <property type="entry name" value="SODIUM/NUCLEOSIDE COTRANSPORTER"/>
    <property type="match status" value="1"/>
</dbReference>
<dbReference type="PANTHER" id="PTHR10590:SF11">
    <property type="entry name" value="SODIUM_NUCLEOSIDE COTRANSPORTER 2"/>
    <property type="match status" value="1"/>
</dbReference>
<dbReference type="Pfam" id="PF07670">
    <property type="entry name" value="Gate"/>
    <property type="match status" value="1"/>
</dbReference>
<dbReference type="Pfam" id="PF07662">
    <property type="entry name" value="Nucleos_tra2_C"/>
    <property type="match status" value="1"/>
</dbReference>
<dbReference type="Pfam" id="PF01773">
    <property type="entry name" value="Nucleos_tra2_N"/>
    <property type="match status" value="1"/>
</dbReference>
<accession>O88627</accession>
<accession>Q8BJP1</accession>
<gene>
    <name type="primary">Slc28a2</name>
    <name evidence="4" type="synonym">Cnt2</name>
</gene>
<feature type="chain" id="PRO_0000070451" description="Sodium/nucleoside cotransporter 2">
    <location>
        <begin position="1"/>
        <end position="660"/>
    </location>
</feature>
<feature type="transmembrane region" description="Helical" evidence="3">
    <location>
        <begin position="82"/>
        <end position="102"/>
    </location>
</feature>
<feature type="transmembrane region" description="Helical" evidence="3">
    <location>
        <begin position="106"/>
        <end position="125"/>
    </location>
</feature>
<feature type="transmembrane region" description="Helical" evidence="3">
    <location>
        <begin position="150"/>
        <end position="168"/>
    </location>
</feature>
<feature type="transmembrane region" description="Helical" evidence="3">
    <location>
        <begin position="174"/>
        <end position="194"/>
    </location>
</feature>
<feature type="transmembrane region" description="Helical" evidence="3">
    <location>
        <begin position="202"/>
        <end position="222"/>
    </location>
</feature>
<feature type="transmembrane region" description="Helical" evidence="3">
    <location>
        <begin position="235"/>
        <end position="255"/>
    </location>
</feature>
<feature type="transmembrane region" description="Helical" evidence="3">
    <location>
        <begin position="262"/>
        <end position="282"/>
    </location>
</feature>
<feature type="transmembrane region" description="Helical" evidence="3">
    <location>
        <begin position="297"/>
        <end position="316"/>
    </location>
</feature>
<feature type="transmembrane region" description="Helical" evidence="3">
    <location>
        <begin position="338"/>
        <end position="357"/>
    </location>
</feature>
<feature type="transmembrane region" description="Helical" evidence="3">
    <location>
        <begin position="364"/>
        <end position="383"/>
    </location>
</feature>
<feature type="transmembrane region" description="Helical" evidence="3">
    <location>
        <begin position="425"/>
        <end position="445"/>
    </location>
</feature>
<feature type="transmembrane region" description="Helical" evidence="3">
    <location>
        <begin position="456"/>
        <end position="476"/>
    </location>
</feature>
<feature type="transmembrane region" description="Helical" evidence="3">
    <location>
        <begin position="531"/>
        <end position="551"/>
    </location>
</feature>
<feature type="transmembrane region" description="Helical" evidence="3">
    <location>
        <begin position="569"/>
        <end position="589"/>
    </location>
</feature>
<feature type="modified residue" description="Phosphoserine" evidence="2">
    <location>
        <position position="46"/>
    </location>
</feature>
<feature type="sequence conflict" description="In Ref. 1; AAC28858." evidence="5" ref="1">
    <original>E</original>
    <variation>K</variation>
    <location>
        <position position="2"/>
    </location>
</feature>
<feature type="sequence conflict" description="In Ref. 1; AAC28858." evidence="5" ref="1">
    <original>T</original>
    <variation>R</variation>
    <location>
        <position position="14"/>
    </location>
</feature>
<feature type="sequence conflict" description="In Ref. 1; AAC28858." evidence="5" ref="1">
    <original>C</original>
    <variation>G</variation>
    <location>
        <position position="18"/>
    </location>
</feature>
<feature type="sequence conflict" description="In Ref. 1; AAC28858." evidence="5" ref="1">
    <original>R</original>
    <variation>K</variation>
    <location>
        <position position="80"/>
    </location>
</feature>
<feature type="sequence conflict" description="In Ref. 1; AAC28858." evidence="5" ref="1">
    <original>A</original>
    <variation>T</variation>
    <location>
        <position position="92"/>
    </location>
</feature>
<feature type="sequence conflict" description="In Ref. 1; AAC28858." evidence="5" ref="1">
    <original>V</original>
    <variation>I</variation>
    <location>
        <position position="154"/>
    </location>
</feature>
<feature type="sequence conflict" description="In Ref. 1; AAC28858." evidence="5" ref="1">
    <original>A</original>
    <variation>T</variation>
    <location>
        <position position="337"/>
    </location>
</feature>
<organism>
    <name type="scientific">Mus musculus</name>
    <name type="common">Mouse</name>
    <dbReference type="NCBI Taxonomy" id="10090"/>
    <lineage>
        <taxon>Eukaryota</taxon>
        <taxon>Metazoa</taxon>
        <taxon>Chordata</taxon>
        <taxon>Craniata</taxon>
        <taxon>Vertebrata</taxon>
        <taxon>Euteleostomi</taxon>
        <taxon>Mammalia</taxon>
        <taxon>Eutheria</taxon>
        <taxon>Euarchontoglires</taxon>
        <taxon>Glires</taxon>
        <taxon>Rodentia</taxon>
        <taxon>Myomorpha</taxon>
        <taxon>Muroidea</taxon>
        <taxon>Muridae</taxon>
        <taxon>Murinae</taxon>
        <taxon>Mus</taxon>
        <taxon>Mus</taxon>
    </lineage>
</organism>
<reference key="1">
    <citation type="journal article" date="2000" name="Gene">
        <title>Cloning, genomic organization and chromosomal localization of the gene encoding the murine sodium-dependent, purine-selective, concentrative nucleoside transporter (CNT2).</title>
        <authorList>
            <person name="Patel D.H."/>
            <person name="Crawford C.R."/>
            <person name="Naeve C.W."/>
            <person name="Belt J.A."/>
        </authorList>
    </citation>
    <scope>NUCLEOTIDE SEQUENCE [MRNA]</scope>
    <source>
        <strain>BALB/cJ</strain>
        <tissue>Spleen</tissue>
    </source>
</reference>
<reference key="2">
    <citation type="journal article" date="2005" name="Science">
        <title>The transcriptional landscape of the mammalian genome.</title>
        <authorList>
            <person name="Carninci P."/>
            <person name="Kasukawa T."/>
            <person name="Katayama S."/>
            <person name="Gough J."/>
            <person name="Frith M.C."/>
            <person name="Maeda N."/>
            <person name="Oyama R."/>
            <person name="Ravasi T."/>
            <person name="Lenhard B."/>
            <person name="Wells C."/>
            <person name="Kodzius R."/>
            <person name="Shimokawa K."/>
            <person name="Bajic V.B."/>
            <person name="Brenner S.E."/>
            <person name="Batalov S."/>
            <person name="Forrest A.R."/>
            <person name="Zavolan M."/>
            <person name="Davis M.J."/>
            <person name="Wilming L.G."/>
            <person name="Aidinis V."/>
            <person name="Allen J.E."/>
            <person name="Ambesi-Impiombato A."/>
            <person name="Apweiler R."/>
            <person name="Aturaliya R.N."/>
            <person name="Bailey T.L."/>
            <person name="Bansal M."/>
            <person name="Baxter L."/>
            <person name="Beisel K.W."/>
            <person name="Bersano T."/>
            <person name="Bono H."/>
            <person name="Chalk A.M."/>
            <person name="Chiu K.P."/>
            <person name="Choudhary V."/>
            <person name="Christoffels A."/>
            <person name="Clutterbuck D.R."/>
            <person name="Crowe M.L."/>
            <person name="Dalla E."/>
            <person name="Dalrymple B.P."/>
            <person name="de Bono B."/>
            <person name="Della Gatta G."/>
            <person name="di Bernardo D."/>
            <person name="Down T."/>
            <person name="Engstrom P."/>
            <person name="Fagiolini M."/>
            <person name="Faulkner G."/>
            <person name="Fletcher C.F."/>
            <person name="Fukushima T."/>
            <person name="Furuno M."/>
            <person name="Futaki S."/>
            <person name="Gariboldi M."/>
            <person name="Georgii-Hemming P."/>
            <person name="Gingeras T.R."/>
            <person name="Gojobori T."/>
            <person name="Green R.E."/>
            <person name="Gustincich S."/>
            <person name="Harbers M."/>
            <person name="Hayashi Y."/>
            <person name="Hensch T.K."/>
            <person name="Hirokawa N."/>
            <person name="Hill D."/>
            <person name="Huminiecki L."/>
            <person name="Iacono M."/>
            <person name="Ikeo K."/>
            <person name="Iwama A."/>
            <person name="Ishikawa T."/>
            <person name="Jakt M."/>
            <person name="Kanapin A."/>
            <person name="Katoh M."/>
            <person name="Kawasawa Y."/>
            <person name="Kelso J."/>
            <person name="Kitamura H."/>
            <person name="Kitano H."/>
            <person name="Kollias G."/>
            <person name="Krishnan S.P."/>
            <person name="Kruger A."/>
            <person name="Kummerfeld S.K."/>
            <person name="Kurochkin I.V."/>
            <person name="Lareau L.F."/>
            <person name="Lazarevic D."/>
            <person name="Lipovich L."/>
            <person name="Liu J."/>
            <person name="Liuni S."/>
            <person name="McWilliam S."/>
            <person name="Madan Babu M."/>
            <person name="Madera M."/>
            <person name="Marchionni L."/>
            <person name="Matsuda H."/>
            <person name="Matsuzawa S."/>
            <person name="Miki H."/>
            <person name="Mignone F."/>
            <person name="Miyake S."/>
            <person name="Morris K."/>
            <person name="Mottagui-Tabar S."/>
            <person name="Mulder N."/>
            <person name="Nakano N."/>
            <person name="Nakauchi H."/>
            <person name="Ng P."/>
            <person name="Nilsson R."/>
            <person name="Nishiguchi S."/>
            <person name="Nishikawa S."/>
            <person name="Nori F."/>
            <person name="Ohara O."/>
            <person name="Okazaki Y."/>
            <person name="Orlando V."/>
            <person name="Pang K.C."/>
            <person name="Pavan W.J."/>
            <person name="Pavesi G."/>
            <person name="Pesole G."/>
            <person name="Petrovsky N."/>
            <person name="Piazza S."/>
            <person name="Reed J."/>
            <person name="Reid J.F."/>
            <person name="Ring B.Z."/>
            <person name="Ringwald M."/>
            <person name="Rost B."/>
            <person name="Ruan Y."/>
            <person name="Salzberg S.L."/>
            <person name="Sandelin A."/>
            <person name="Schneider C."/>
            <person name="Schoenbach C."/>
            <person name="Sekiguchi K."/>
            <person name="Semple C.A."/>
            <person name="Seno S."/>
            <person name="Sessa L."/>
            <person name="Sheng Y."/>
            <person name="Shibata Y."/>
            <person name="Shimada H."/>
            <person name="Shimada K."/>
            <person name="Silva D."/>
            <person name="Sinclair B."/>
            <person name="Sperling S."/>
            <person name="Stupka E."/>
            <person name="Sugiura K."/>
            <person name="Sultana R."/>
            <person name="Takenaka Y."/>
            <person name="Taki K."/>
            <person name="Tammoja K."/>
            <person name="Tan S.L."/>
            <person name="Tang S."/>
            <person name="Taylor M.S."/>
            <person name="Tegner J."/>
            <person name="Teichmann S.A."/>
            <person name="Ueda H.R."/>
            <person name="van Nimwegen E."/>
            <person name="Verardo R."/>
            <person name="Wei C.L."/>
            <person name="Yagi K."/>
            <person name="Yamanishi H."/>
            <person name="Zabarovsky E."/>
            <person name="Zhu S."/>
            <person name="Zimmer A."/>
            <person name="Hide W."/>
            <person name="Bult C."/>
            <person name="Grimmond S.M."/>
            <person name="Teasdale R.D."/>
            <person name="Liu E.T."/>
            <person name="Brusic V."/>
            <person name="Quackenbush J."/>
            <person name="Wahlestedt C."/>
            <person name="Mattick J.S."/>
            <person name="Hume D.A."/>
            <person name="Kai C."/>
            <person name="Sasaki D."/>
            <person name="Tomaru Y."/>
            <person name="Fukuda S."/>
            <person name="Kanamori-Katayama M."/>
            <person name="Suzuki M."/>
            <person name="Aoki J."/>
            <person name="Arakawa T."/>
            <person name="Iida J."/>
            <person name="Imamura K."/>
            <person name="Itoh M."/>
            <person name="Kato T."/>
            <person name="Kawaji H."/>
            <person name="Kawagashira N."/>
            <person name="Kawashima T."/>
            <person name="Kojima M."/>
            <person name="Kondo S."/>
            <person name="Konno H."/>
            <person name="Nakano K."/>
            <person name="Ninomiya N."/>
            <person name="Nishio T."/>
            <person name="Okada M."/>
            <person name="Plessy C."/>
            <person name="Shibata K."/>
            <person name="Shiraki T."/>
            <person name="Suzuki S."/>
            <person name="Tagami M."/>
            <person name="Waki K."/>
            <person name="Watahiki A."/>
            <person name="Okamura-Oho Y."/>
            <person name="Suzuki H."/>
            <person name="Kawai J."/>
            <person name="Hayashizaki Y."/>
        </authorList>
    </citation>
    <scope>NUCLEOTIDE SEQUENCE [LARGE SCALE MRNA]</scope>
    <source>
        <strain>C57BL/6J</strain>
        <tissue>Adipose tissue</tissue>
        <tissue>Bone marrow</tissue>
    </source>
</reference>
<reference key="3">
    <citation type="journal article" date="2009" name="PLoS Biol.">
        <title>Lineage-specific biology revealed by a finished genome assembly of the mouse.</title>
        <authorList>
            <person name="Church D.M."/>
            <person name="Goodstadt L."/>
            <person name="Hillier L.W."/>
            <person name="Zody M.C."/>
            <person name="Goldstein S."/>
            <person name="She X."/>
            <person name="Bult C.J."/>
            <person name="Agarwala R."/>
            <person name="Cherry J.L."/>
            <person name="DiCuccio M."/>
            <person name="Hlavina W."/>
            <person name="Kapustin Y."/>
            <person name="Meric P."/>
            <person name="Maglott D."/>
            <person name="Birtle Z."/>
            <person name="Marques A.C."/>
            <person name="Graves T."/>
            <person name="Zhou S."/>
            <person name="Teague B."/>
            <person name="Potamousis K."/>
            <person name="Churas C."/>
            <person name="Place M."/>
            <person name="Herschleb J."/>
            <person name="Runnheim R."/>
            <person name="Forrest D."/>
            <person name="Amos-Landgraf J."/>
            <person name="Schwartz D.C."/>
            <person name="Cheng Z."/>
            <person name="Lindblad-Toh K."/>
            <person name="Eichler E.E."/>
            <person name="Ponting C.P."/>
        </authorList>
    </citation>
    <scope>NUCLEOTIDE SEQUENCE [LARGE SCALE GENOMIC DNA]</scope>
    <source>
        <strain>C57BL/6J</strain>
    </source>
</reference>
<reference key="4">
    <citation type="journal article" date="2010" name="Cell">
        <title>A tissue-specific atlas of mouse protein phosphorylation and expression.</title>
        <authorList>
            <person name="Huttlin E.L."/>
            <person name="Jedrychowski M.P."/>
            <person name="Elias J.E."/>
            <person name="Goswami T."/>
            <person name="Rad R."/>
            <person name="Beausoleil S.A."/>
            <person name="Villen J."/>
            <person name="Haas W."/>
            <person name="Sowa M.E."/>
            <person name="Gygi S.P."/>
        </authorList>
    </citation>
    <scope>IDENTIFICATION BY MASS SPECTROMETRY [LARGE SCALE ANALYSIS]</scope>
    <source>
        <tissue>Brown adipose tissue</tissue>
        <tissue>Heart</tissue>
        <tissue>Spleen</tissue>
    </source>
</reference>
<evidence type="ECO:0000250" key="1">
    <source>
        <dbReference type="UniProtKB" id="O43868"/>
    </source>
</evidence>
<evidence type="ECO:0000250" key="2">
    <source>
        <dbReference type="UniProtKB" id="Q62773"/>
    </source>
</evidence>
<evidence type="ECO:0000255" key="3"/>
<evidence type="ECO:0000303" key="4">
    <source>
    </source>
</evidence>
<evidence type="ECO:0000305" key="5"/>